<reference key="1">
    <citation type="journal article" date="2006" name="Genome Biol.">
        <title>Genomic analysis reveals that Pseudomonas aeruginosa virulence is combinatorial.</title>
        <authorList>
            <person name="Lee D.G."/>
            <person name="Urbach J.M."/>
            <person name="Wu G."/>
            <person name="Liberati N.T."/>
            <person name="Feinbaum R.L."/>
            <person name="Miyata S."/>
            <person name="Diggins L.T."/>
            <person name="He J."/>
            <person name="Saucier M."/>
            <person name="Deziel E."/>
            <person name="Friedman L."/>
            <person name="Li L."/>
            <person name="Grills G."/>
            <person name="Montgomery K."/>
            <person name="Kucherlapati R."/>
            <person name="Rahme L.G."/>
            <person name="Ausubel F.M."/>
        </authorList>
    </citation>
    <scope>NUCLEOTIDE SEQUENCE [LARGE SCALE GENOMIC DNA]</scope>
    <source>
        <strain>UCBPP-PA14</strain>
    </source>
</reference>
<feature type="chain" id="PRO_1000009087" description="Phosphoheptose isomerase">
    <location>
        <begin position="1"/>
        <end position="197"/>
    </location>
</feature>
<feature type="domain" description="SIS" evidence="1">
    <location>
        <begin position="36"/>
        <end position="197"/>
    </location>
</feature>
<feature type="binding site" evidence="1">
    <location>
        <begin position="51"/>
        <end position="53"/>
    </location>
    <ligand>
        <name>substrate</name>
    </ligand>
</feature>
<feature type="binding site" evidence="1">
    <location>
        <position position="60"/>
    </location>
    <ligand>
        <name>Zn(2+)</name>
        <dbReference type="ChEBI" id="CHEBI:29105"/>
    </ligand>
</feature>
<feature type="binding site" evidence="1">
    <location>
        <position position="64"/>
    </location>
    <ligand>
        <name>substrate</name>
    </ligand>
</feature>
<feature type="binding site" evidence="1">
    <location>
        <position position="64"/>
    </location>
    <ligand>
        <name>Zn(2+)</name>
        <dbReference type="ChEBI" id="CHEBI:29105"/>
    </ligand>
</feature>
<feature type="binding site" evidence="1">
    <location>
        <begin position="93"/>
        <end position="94"/>
    </location>
    <ligand>
        <name>substrate</name>
    </ligand>
</feature>
<feature type="binding site" evidence="1">
    <location>
        <begin position="119"/>
        <end position="121"/>
    </location>
    <ligand>
        <name>substrate</name>
    </ligand>
</feature>
<feature type="binding site" evidence="1">
    <location>
        <position position="124"/>
    </location>
    <ligand>
        <name>substrate</name>
    </ligand>
</feature>
<feature type="binding site" evidence="1">
    <location>
        <position position="174"/>
    </location>
    <ligand>
        <name>substrate</name>
    </ligand>
</feature>
<feature type="binding site" evidence="1">
    <location>
        <position position="174"/>
    </location>
    <ligand>
        <name>Zn(2+)</name>
        <dbReference type="ChEBI" id="CHEBI:29105"/>
    </ligand>
</feature>
<feature type="binding site" evidence="1">
    <location>
        <position position="182"/>
    </location>
    <ligand>
        <name>Zn(2+)</name>
        <dbReference type="ChEBI" id="CHEBI:29105"/>
    </ligand>
</feature>
<evidence type="ECO:0000255" key="1">
    <source>
        <dbReference type="HAMAP-Rule" id="MF_00067"/>
    </source>
</evidence>
<protein>
    <recommendedName>
        <fullName evidence="1">Phosphoheptose isomerase</fullName>
        <ecNumber evidence="1">5.3.1.28</ecNumber>
    </recommendedName>
    <alternativeName>
        <fullName evidence="1">Sedoheptulose 7-phosphate isomerase</fullName>
    </alternativeName>
</protein>
<comment type="function">
    <text evidence="1">Catalyzes the isomerization of sedoheptulose 7-phosphate in D-glycero-D-manno-heptose 7-phosphate.</text>
</comment>
<comment type="catalytic activity">
    <reaction evidence="1">
        <text>2 D-sedoheptulose 7-phosphate = D-glycero-alpha-D-manno-heptose 7-phosphate + D-glycero-beta-D-manno-heptose 7-phosphate</text>
        <dbReference type="Rhea" id="RHEA:27489"/>
        <dbReference type="ChEBI" id="CHEBI:57483"/>
        <dbReference type="ChEBI" id="CHEBI:60203"/>
        <dbReference type="ChEBI" id="CHEBI:60204"/>
        <dbReference type="EC" id="5.3.1.28"/>
    </reaction>
</comment>
<comment type="cofactor">
    <cofactor evidence="1">
        <name>Zn(2+)</name>
        <dbReference type="ChEBI" id="CHEBI:29105"/>
    </cofactor>
    <text evidence="1">Binds 1 zinc ion per subunit.</text>
</comment>
<comment type="pathway">
    <text evidence="1">Carbohydrate biosynthesis; D-glycero-D-manno-heptose 7-phosphate biosynthesis; D-glycero-alpha-D-manno-heptose 7-phosphate and D-glycero-beta-D-manno-heptose 7-phosphate from sedoheptulose 7-phosphate: step 1/1.</text>
</comment>
<comment type="subunit">
    <text evidence="1">Homotetramer.</text>
</comment>
<comment type="subcellular location">
    <subcellularLocation>
        <location evidence="1">Cytoplasm</location>
    </subcellularLocation>
</comment>
<comment type="miscellaneous">
    <text evidence="1">The reaction produces a racemic mixture of D-glycero-alpha-D-manno-heptose 7-phosphate and D-glycero-beta-D-manno-heptose 7-phosphate.</text>
</comment>
<comment type="similarity">
    <text evidence="1">Belongs to the SIS family. GmhA subfamily.</text>
</comment>
<gene>
    <name evidence="1" type="primary">gmhA</name>
    <name type="ordered locus">PA14_57500</name>
</gene>
<proteinExistence type="evidence at protein level"/>
<accession>Q02H15</accession>
<organism>
    <name type="scientific">Pseudomonas aeruginosa (strain UCBPP-PA14)</name>
    <dbReference type="NCBI Taxonomy" id="208963"/>
    <lineage>
        <taxon>Bacteria</taxon>
        <taxon>Pseudomonadati</taxon>
        <taxon>Pseudomonadota</taxon>
        <taxon>Gammaproteobacteria</taxon>
        <taxon>Pseudomonadales</taxon>
        <taxon>Pseudomonadaceae</taxon>
        <taxon>Pseudomonas</taxon>
    </lineage>
</organism>
<dbReference type="EC" id="5.3.1.28" evidence="1"/>
<dbReference type="EMBL" id="CP000438">
    <property type="protein sequence ID" value="ABJ13694.1"/>
    <property type="molecule type" value="Genomic_DNA"/>
</dbReference>
<dbReference type="RefSeq" id="WP_003094149.1">
    <property type="nucleotide sequence ID" value="NZ_CP034244.1"/>
</dbReference>
<dbReference type="PDB" id="3BJZ">
    <property type="method" value="X-ray"/>
    <property type="resolution" value="2.40 A"/>
    <property type="chains" value="A/B/C/D=1-197"/>
</dbReference>
<dbReference type="PDBsum" id="3BJZ"/>
<dbReference type="SMR" id="Q02H15"/>
<dbReference type="KEGG" id="pau:PA14_57500"/>
<dbReference type="PseudoCAP" id="PA14_57500"/>
<dbReference type="HOGENOM" id="CLU_080999_3_1_6"/>
<dbReference type="BioCyc" id="PAER208963:G1G74-4843-MONOMER"/>
<dbReference type="UniPathway" id="UPA00041">
    <property type="reaction ID" value="UER00436"/>
</dbReference>
<dbReference type="Proteomes" id="UP000000653">
    <property type="component" value="Chromosome"/>
</dbReference>
<dbReference type="GO" id="GO:0005737">
    <property type="term" value="C:cytoplasm"/>
    <property type="evidence" value="ECO:0007669"/>
    <property type="project" value="UniProtKB-SubCell"/>
</dbReference>
<dbReference type="GO" id="GO:0097367">
    <property type="term" value="F:carbohydrate derivative binding"/>
    <property type="evidence" value="ECO:0007669"/>
    <property type="project" value="InterPro"/>
</dbReference>
<dbReference type="GO" id="GO:0008968">
    <property type="term" value="F:D-sedoheptulose 7-phosphate isomerase activity"/>
    <property type="evidence" value="ECO:0007669"/>
    <property type="project" value="UniProtKB-UniRule"/>
</dbReference>
<dbReference type="GO" id="GO:0008270">
    <property type="term" value="F:zinc ion binding"/>
    <property type="evidence" value="ECO:0007669"/>
    <property type="project" value="UniProtKB-UniRule"/>
</dbReference>
<dbReference type="GO" id="GO:0005975">
    <property type="term" value="P:carbohydrate metabolic process"/>
    <property type="evidence" value="ECO:0007669"/>
    <property type="project" value="UniProtKB-UniRule"/>
</dbReference>
<dbReference type="GO" id="GO:2001061">
    <property type="term" value="P:D-glycero-D-manno-heptose 7-phosphate biosynthetic process"/>
    <property type="evidence" value="ECO:0007669"/>
    <property type="project" value="UniProtKB-UniPathway"/>
</dbReference>
<dbReference type="CDD" id="cd05006">
    <property type="entry name" value="SIS_GmhA"/>
    <property type="match status" value="1"/>
</dbReference>
<dbReference type="Gene3D" id="3.40.50.10490">
    <property type="entry name" value="Glucose-6-phosphate isomerase like protein, domain 1"/>
    <property type="match status" value="1"/>
</dbReference>
<dbReference type="HAMAP" id="MF_00067">
    <property type="entry name" value="GmhA"/>
    <property type="match status" value="1"/>
</dbReference>
<dbReference type="InterPro" id="IPR035461">
    <property type="entry name" value="GmhA/DiaA"/>
</dbReference>
<dbReference type="InterPro" id="IPR004515">
    <property type="entry name" value="Phosphoheptose_Isoase"/>
</dbReference>
<dbReference type="InterPro" id="IPR001347">
    <property type="entry name" value="SIS_dom"/>
</dbReference>
<dbReference type="InterPro" id="IPR046348">
    <property type="entry name" value="SIS_dom_sf"/>
</dbReference>
<dbReference type="InterPro" id="IPR050099">
    <property type="entry name" value="SIS_GmhA/DiaA_subfam"/>
</dbReference>
<dbReference type="NCBIfam" id="NF010546">
    <property type="entry name" value="PRK13936.1"/>
    <property type="match status" value="1"/>
</dbReference>
<dbReference type="PANTHER" id="PTHR30390:SF6">
    <property type="entry name" value="DNAA INITIATOR-ASSOCIATING PROTEIN DIAA"/>
    <property type="match status" value="1"/>
</dbReference>
<dbReference type="PANTHER" id="PTHR30390">
    <property type="entry name" value="SEDOHEPTULOSE 7-PHOSPHATE ISOMERASE / DNAA INITIATOR-ASSOCIATING FACTOR FOR REPLICATION INITIATION"/>
    <property type="match status" value="1"/>
</dbReference>
<dbReference type="Pfam" id="PF13580">
    <property type="entry name" value="SIS_2"/>
    <property type="match status" value="1"/>
</dbReference>
<dbReference type="SUPFAM" id="SSF53697">
    <property type="entry name" value="SIS domain"/>
    <property type="match status" value="1"/>
</dbReference>
<dbReference type="PROSITE" id="PS51464">
    <property type="entry name" value="SIS"/>
    <property type="match status" value="1"/>
</dbReference>
<sequence length="197" mass="21413">MDMQHRIRQLFQASIETKQQALEVLPPYIEQASLVMVNALLNEGKILSCGNGGSAGDAQHFSSELLNRFERERPSLPAVALTTDSSTITSIANDYSYNEVFSKQIRALGQPGDVLLAISTSGNSANVIQAIQAAHDREMLVVALTGRDGGGMASLLLPEDVEIRVPSKITARIQEVHLLAIHCLCDLIDRQLFGSEE</sequence>
<keyword id="KW-0002">3D-structure</keyword>
<keyword id="KW-0119">Carbohydrate metabolism</keyword>
<keyword id="KW-0963">Cytoplasm</keyword>
<keyword id="KW-0413">Isomerase</keyword>
<keyword id="KW-0479">Metal-binding</keyword>
<keyword id="KW-0862">Zinc</keyword>
<name>GMHA_PSEAB</name>